<feature type="chain" id="PRO_0000264397" description="UDP-3-O-acylglucosamine N-acyltransferase">
    <location>
        <begin position="1"/>
        <end position="349"/>
    </location>
</feature>
<feature type="active site" description="Proton acceptor" evidence="1">
    <location>
        <position position="243"/>
    </location>
</feature>
<proteinExistence type="inferred from homology"/>
<evidence type="ECO:0000255" key="1">
    <source>
        <dbReference type="HAMAP-Rule" id="MF_00523"/>
    </source>
</evidence>
<evidence type="ECO:0000305" key="2"/>
<organism>
    <name type="scientific">Myxococcus xanthus (strain DK1622)</name>
    <dbReference type="NCBI Taxonomy" id="246197"/>
    <lineage>
        <taxon>Bacteria</taxon>
        <taxon>Pseudomonadati</taxon>
        <taxon>Myxococcota</taxon>
        <taxon>Myxococcia</taxon>
        <taxon>Myxococcales</taxon>
        <taxon>Cystobacterineae</taxon>
        <taxon>Myxococcaceae</taxon>
        <taxon>Myxococcus</taxon>
    </lineage>
</organism>
<comment type="function">
    <text evidence="1">Catalyzes the N-acylation of UDP-3-O-acylglucosamine using 3-hydroxyacyl-ACP as the acyl donor. Is involved in the biosynthesis of lipid A, a phosphorylated glycolipid that anchors the lipopolysaccharide to the outer membrane of the cell.</text>
</comment>
<comment type="catalytic activity">
    <reaction evidence="1">
        <text>a UDP-3-O-[(3R)-3-hydroxyacyl]-alpha-D-glucosamine + a (3R)-hydroxyacyl-[ACP] = a UDP-2-N,3-O-bis[(3R)-3-hydroxyacyl]-alpha-D-glucosamine + holo-[ACP] + H(+)</text>
        <dbReference type="Rhea" id="RHEA:53836"/>
        <dbReference type="Rhea" id="RHEA-COMP:9685"/>
        <dbReference type="Rhea" id="RHEA-COMP:9945"/>
        <dbReference type="ChEBI" id="CHEBI:15378"/>
        <dbReference type="ChEBI" id="CHEBI:64479"/>
        <dbReference type="ChEBI" id="CHEBI:78827"/>
        <dbReference type="ChEBI" id="CHEBI:137740"/>
        <dbReference type="ChEBI" id="CHEBI:137748"/>
        <dbReference type="EC" id="2.3.1.191"/>
    </reaction>
</comment>
<comment type="pathway">
    <text evidence="1">Bacterial outer membrane biogenesis; LPS lipid A biosynthesis.</text>
</comment>
<comment type="subunit">
    <text evidence="1">Homotrimer.</text>
</comment>
<comment type="similarity">
    <text evidence="1">Belongs to the transferase hexapeptide repeat family. LpxD subfamily.</text>
</comment>
<comment type="sequence caution" evidence="2">
    <conflict type="erroneous initiation">
        <sequence resource="EMBL-CDS" id="ABF87897"/>
    </conflict>
</comment>
<reference key="1">
    <citation type="journal article" date="2006" name="Proc. Natl. Acad. Sci. U.S.A.">
        <title>Evolution of sensory complexity recorded in a myxobacterial genome.</title>
        <authorList>
            <person name="Goldman B.S."/>
            <person name="Nierman W.C."/>
            <person name="Kaiser D."/>
            <person name="Slater S.C."/>
            <person name="Durkin A.S."/>
            <person name="Eisen J.A."/>
            <person name="Ronning C.M."/>
            <person name="Barbazuk W.B."/>
            <person name="Blanchard M."/>
            <person name="Field C."/>
            <person name="Halling C."/>
            <person name="Hinkle G."/>
            <person name="Iartchuk O."/>
            <person name="Kim H.S."/>
            <person name="Mackenzie C."/>
            <person name="Madupu R."/>
            <person name="Miller N."/>
            <person name="Shvartsbeyn A."/>
            <person name="Sullivan S.A."/>
            <person name="Vaudin M."/>
            <person name="Wiegand R."/>
            <person name="Kaplan H.B."/>
        </authorList>
    </citation>
    <scope>NUCLEOTIDE SEQUENCE [LARGE SCALE GENOMIC DNA]</scope>
    <source>
        <strain>DK1622</strain>
    </source>
</reference>
<name>LPXD_MYXXD</name>
<keyword id="KW-0012">Acyltransferase</keyword>
<keyword id="KW-0441">Lipid A biosynthesis</keyword>
<keyword id="KW-0444">Lipid biosynthesis</keyword>
<keyword id="KW-0443">Lipid metabolism</keyword>
<keyword id="KW-1185">Reference proteome</keyword>
<keyword id="KW-0677">Repeat</keyword>
<keyword id="KW-0808">Transferase</keyword>
<protein>
    <recommendedName>
        <fullName evidence="1">UDP-3-O-acylglucosamine N-acyltransferase</fullName>
        <ecNumber evidence="1">2.3.1.191</ecNumber>
    </recommendedName>
</protein>
<dbReference type="EC" id="2.3.1.191" evidence="1"/>
<dbReference type="EMBL" id="CP000113">
    <property type="protein sequence ID" value="ABF87897.1"/>
    <property type="status" value="ALT_INIT"/>
    <property type="molecule type" value="Genomic_DNA"/>
</dbReference>
<dbReference type="RefSeq" id="WP_043612861.1">
    <property type="nucleotide sequence ID" value="NC_008095.1"/>
</dbReference>
<dbReference type="SMR" id="Q1D385"/>
<dbReference type="STRING" id="246197.MXAN_4726"/>
<dbReference type="EnsemblBacteria" id="ABF87897">
    <property type="protein sequence ID" value="ABF87897"/>
    <property type="gene ID" value="MXAN_4726"/>
</dbReference>
<dbReference type="GeneID" id="41362025"/>
<dbReference type="KEGG" id="mxa:MXAN_4726"/>
<dbReference type="eggNOG" id="COG1044">
    <property type="taxonomic scope" value="Bacteria"/>
</dbReference>
<dbReference type="HOGENOM" id="CLU_049865_0_0_7"/>
<dbReference type="OrthoDB" id="9784739at2"/>
<dbReference type="UniPathway" id="UPA00973"/>
<dbReference type="Proteomes" id="UP000002402">
    <property type="component" value="Chromosome"/>
</dbReference>
<dbReference type="GO" id="GO:0016020">
    <property type="term" value="C:membrane"/>
    <property type="evidence" value="ECO:0007669"/>
    <property type="project" value="GOC"/>
</dbReference>
<dbReference type="GO" id="GO:0016410">
    <property type="term" value="F:N-acyltransferase activity"/>
    <property type="evidence" value="ECO:0007669"/>
    <property type="project" value="InterPro"/>
</dbReference>
<dbReference type="GO" id="GO:0009245">
    <property type="term" value="P:lipid A biosynthetic process"/>
    <property type="evidence" value="ECO:0007669"/>
    <property type="project" value="UniProtKB-UniRule"/>
</dbReference>
<dbReference type="CDD" id="cd03352">
    <property type="entry name" value="LbH_LpxD"/>
    <property type="match status" value="1"/>
</dbReference>
<dbReference type="Gene3D" id="2.160.10.10">
    <property type="entry name" value="Hexapeptide repeat proteins"/>
    <property type="match status" value="1"/>
</dbReference>
<dbReference type="Gene3D" id="3.40.1390.10">
    <property type="entry name" value="MurE/MurF, N-terminal domain"/>
    <property type="match status" value="1"/>
</dbReference>
<dbReference type="HAMAP" id="MF_00523">
    <property type="entry name" value="LpxD"/>
    <property type="match status" value="1"/>
</dbReference>
<dbReference type="InterPro" id="IPR001451">
    <property type="entry name" value="Hexapep"/>
</dbReference>
<dbReference type="InterPro" id="IPR018357">
    <property type="entry name" value="Hexapep_transf_CS"/>
</dbReference>
<dbReference type="InterPro" id="IPR007691">
    <property type="entry name" value="LpxD"/>
</dbReference>
<dbReference type="InterPro" id="IPR011004">
    <property type="entry name" value="Trimer_LpxA-like_sf"/>
</dbReference>
<dbReference type="InterPro" id="IPR020573">
    <property type="entry name" value="UDP_GlcNAc_AcTrfase_non-rep"/>
</dbReference>
<dbReference type="NCBIfam" id="TIGR01853">
    <property type="entry name" value="lipid_A_lpxD"/>
    <property type="match status" value="1"/>
</dbReference>
<dbReference type="NCBIfam" id="NF002060">
    <property type="entry name" value="PRK00892.1"/>
    <property type="match status" value="1"/>
</dbReference>
<dbReference type="PANTHER" id="PTHR43378">
    <property type="entry name" value="UDP-3-O-ACYLGLUCOSAMINE N-ACYLTRANSFERASE"/>
    <property type="match status" value="1"/>
</dbReference>
<dbReference type="PANTHER" id="PTHR43378:SF2">
    <property type="entry name" value="UDP-3-O-ACYLGLUCOSAMINE N-ACYLTRANSFERASE 1, MITOCHONDRIAL-RELATED"/>
    <property type="match status" value="1"/>
</dbReference>
<dbReference type="Pfam" id="PF00132">
    <property type="entry name" value="Hexapep"/>
    <property type="match status" value="1"/>
</dbReference>
<dbReference type="Pfam" id="PF04613">
    <property type="entry name" value="LpxD"/>
    <property type="match status" value="1"/>
</dbReference>
<dbReference type="SUPFAM" id="SSF51161">
    <property type="entry name" value="Trimeric LpxA-like enzymes"/>
    <property type="match status" value="1"/>
</dbReference>
<dbReference type="PROSITE" id="PS00101">
    <property type="entry name" value="HEXAPEP_TRANSFERASES"/>
    <property type="match status" value="1"/>
</dbReference>
<gene>
    <name evidence="1" type="primary">lpxD</name>
    <name type="ordered locus">MXAN_4726</name>
</gene>
<accession>Q1D385</accession>
<sequence length="349" mass="36382">MPRQLGELAAHVGGELLGDPSQLIHGLNGLEEAGPGDVSFYGNPRYRRQFEATRASAVLVGADVPPREGVALVRVANPHLAYAKLLRLFHAPERPAAGVRPGAWVHPEATVHPEAVLLPGASVDRGGRVGARTVLYPGAYVGEQAEVGEDCVLYPNVTVRERCIVGARVILHASSVVGADGFGFAFNPEGEAGPEHFKIPQVGIVRIEDDVEVGACTCIDRATVGETVVGRGAKLDNLVQIAHNVRVGPLSLICAQAGVSGSAEVGTGVVLAGQVGVVGHIRVGDLAKVGAQSGVAHDVPDGQVVSGSPAVPHREWLRASAAAGQMADLLKEVRALRRRVETLEKEKGP</sequence>